<accession>B8DU51</accession>
<name>SYFA_BIFA0</name>
<evidence type="ECO:0000255" key="1">
    <source>
        <dbReference type="HAMAP-Rule" id="MF_00281"/>
    </source>
</evidence>
<feature type="chain" id="PRO_1000199299" description="Phenylalanine--tRNA ligase alpha subunit">
    <location>
        <begin position="1"/>
        <end position="355"/>
    </location>
</feature>
<feature type="binding site" evidence="1">
    <location>
        <position position="273"/>
    </location>
    <ligand>
        <name>Mg(2+)</name>
        <dbReference type="ChEBI" id="CHEBI:18420"/>
        <note>shared with beta subunit</note>
    </ligand>
</feature>
<protein>
    <recommendedName>
        <fullName evidence="1">Phenylalanine--tRNA ligase alpha subunit</fullName>
        <ecNumber evidence="1">6.1.1.20</ecNumber>
    </recommendedName>
    <alternativeName>
        <fullName evidence="1">Phenylalanyl-tRNA synthetase alpha subunit</fullName>
        <shortName evidence="1">PheRS</shortName>
    </alternativeName>
</protein>
<proteinExistence type="inferred from homology"/>
<comment type="catalytic activity">
    <reaction evidence="1">
        <text>tRNA(Phe) + L-phenylalanine + ATP = L-phenylalanyl-tRNA(Phe) + AMP + diphosphate + H(+)</text>
        <dbReference type="Rhea" id="RHEA:19413"/>
        <dbReference type="Rhea" id="RHEA-COMP:9668"/>
        <dbReference type="Rhea" id="RHEA-COMP:9699"/>
        <dbReference type="ChEBI" id="CHEBI:15378"/>
        <dbReference type="ChEBI" id="CHEBI:30616"/>
        <dbReference type="ChEBI" id="CHEBI:33019"/>
        <dbReference type="ChEBI" id="CHEBI:58095"/>
        <dbReference type="ChEBI" id="CHEBI:78442"/>
        <dbReference type="ChEBI" id="CHEBI:78531"/>
        <dbReference type="ChEBI" id="CHEBI:456215"/>
        <dbReference type="EC" id="6.1.1.20"/>
    </reaction>
</comment>
<comment type="cofactor">
    <cofactor evidence="1">
        <name>Mg(2+)</name>
        <dbReference type="ChEBI" id="CHEBI:18420"/>
    </cofactor>
    <text evidence="1">Binds 2 magnesium ions per tetramer.</text>
</comment>
<comment type="subunit">
    <text evidence="1">Tetramer of two alpha and two beta subunits.</text>
</comment>
<comment type="subcellular location">
    <subcellularLocation>
        <location evidence="1">Cytoplasm</location>
    </subcellularLocation>
</comment>
<comment type="similarity">
    <text evidence="1">Belongs to the class-II aminoacyl-tRNA synthetase family. Phe-tRNA synthetase alpha subunit type 1 subfamily.</text>
</comment>
<organism>
    <name type="scientific">Bifidobacterium animalis subsp. lactis (strain AD011)</name>
    <dbReference type="NCBI Taxonomy" id="442563"/>
    <lineage>
        <taxon>Bacteria</taxon>
        <taxon>Bacillati</taxon>
        <taxon>Actinomycetota</taxon>
        <taxon>Actinomycetes</taxon>
        <taxon>Bifidobacteriales</taxon>
        <taxon>Bifidobacteriaceae</taxon>
        <taxon>Bifidobacterium</taxon>
    </lineage>
</organism>
<gene>
    <name evidence="1" type="primary">pheS</name>
    <name type="ordered locus">BLA_1242</name>
</gene>
<keyword id="KW-0030">Aminoacyl-tRNA synthetase</keyword>
<keyword id="KW-0067">ATP-binding</keyword>
<keyword id="KW-0963">Cytoplasm</keyword>
<keyword id="KW-0436">Ligase</keyword>
<keyword id="KW-0460">Magnesium</keyword>
<keyword id="KW-0479">Metal-binding</keyword>
<keyword id="KW-0547">Nucleotide-binding</keyword>
<keyword id="KW-0648">Protein biosynthesis</keyword>
<keyword id="KW-1185">Reference proteome</keyword>
<dbReference type="EC" id="6.1.1.20" evidence="1"/>
<dbReference type="EMBL" id="CP001213">
    <property type="protein sequence ID" value="ACL29530.1"/>
    <property type="molecule type" value="Genomic_DNA"/>
</dbReference>
<dbReference type="RefSeq" id="WP_004218088.1">
    <property type="nucleotide sequence ID" value="NC_011835.1"/>
</dbReference>
<dbReference type="SMR" id="B8DU51"/>
<dbReference type="STRING" id="442563.BLA_1242"/>
<dbReference type="GeneID" id="29696527"/>
<dbReference type="KEGG" id="bla:BLA_1242"/>
<dbReference type="HOGENOM" id="CLU_025086_0_0_11"/>
<dbReference type="Proteomes" id="UP000002456">
    <property type="component" value="Chromosome"/>
</dbReference>
<dbReference type="GO" id="GO:0005737">
    <property type="term" value="C:cytoplasm"/>
    <property type="evidence" value="ECO:0007669"/>
    <property type="project" value="UniProtKB-SubCell"/>
</dbReference>
<dbReference type="GO" id="GO:0005524">
    <property type="term" value="F:ATP binding"/>
    <property type="evidence" value="ECO:0007669"/>
    <property type="project" value="UniProtKB-UniRule"/>
</dbReference>
<dbReference type="GO" id="GO:0000287">
    <property type="term" value="F:magnesium ion binding"/>
    <property type="evidence" value="ECO:0007669"/>
    <property type="project" value="UniProtKB-UniRule"/>
</dbReference>
<dbReference type="GO" id="GO:0004826">
    <property type="term" value="F:phenylalanine-tRNA ligase activity"/>
    <property type="evidence" value="ECO:0007669"/>
    <property type="project" value="UniProtKB-UniRule"/>
</dbReference>
<dbReference type="GO" id="GO:0000049">
    <property type="term" value="F:tRNA binding"/>
    <property type="evidence" value="ECO:0007669"/>
    <property type="project" value="InterPro"/>
</dbReference>
<dbReference type="GO" id="GO:0006432">
    <property type="term" value="P:phenylalanyl-tRNA aminoacylation"/>
    <property type="evidence" value="ECO:0007669"/>
    <property type="project" value="UniProtKB-UniRule"/>
</dbReference>
<dbReference type="CDD" id="cd00496">
    <property type="entry name" value="PheRS_alpha_core"/>
    <property type="match status" value="1"/>
</dbReference>
<dbReference type="Gene3D" id="3.30.930.10">
    <property type="entry name" value="Bira Bifunctional Protein, Domain 2"/>
    <property type="match status" value="1"/>
</dbReference>
<dbReference type="HAMAP" id="MF_00281">
    <property type="entry name" value="Phe_tRNA_synth_alpha1"/>
    <property type="match status" value="1"/>
</dbReference>
<dbReference type="InterPro" id="IPR006195">
    <property type="entry name" value="aa-tRNA-synth_II"/>
</dbReference>
<dbReference type="InterPro" id="IPR045864">
    <property type="entry name" value="aa-tRNA-synth_II/BPL/LPL"/>
</dbReference>
<dbReference type="InterPro" id="IPR004529">
    <property type="entry name" value="Phe-tRNA-synth_IIc_asu"/>
</dbReference>
<dbReference type="InterPro" id="IPR004188">
    <property type="entry name" value="Phe-tRNA_ligase_II_N"/>
</dbReference>
<dbReference type="InterPro" id="IPR022911">
    <property type="entry name" value="Phe_tRNA_ligase_alpha1_bac"/>
</dbReference>
<dbReference type="InterPro" id="IPR002319">
    <property type="entry name" value="Phenylalanyl-tRNA_Synthase"/>
</dbReference>
<dbReference type="InterPro" id="IPR010978">
    <property type="entry name" value="tRNA-bd_arm"/>
</dbReference>
<dbReference type="NCBIfam" id="TIGR00468">
    <property type="entry name" value="pheS"/>
    <property type="match status" value="1"/>
</dbReference>
<dbReference type="PANTHER" id="PTHR11538:SF41">
    <property type="entry name" value="PHENYLALANINE--TRNA LIGASE, MITOCHONDRIAL"/>
    <property type="match status" value="1"/>
</dbReference>
<dbReference type="PANTHER" id="PTHR11538">
    <property type="entry name" value="PHENYLALANYL-TRNA SYNTHETASE"/>
    <property type="match status" value="1"/>
</dbReference>
<dbReference type="Pfam" id="PF02912">
    <property type="entry name" value="Phe_tRNA-synt_N"/>
    <property type="match status" value="1"/>
</dbReference>
<dbReference type="Pfam" id="PF01409">
    <property type="entry name" value="tRNA-synt_2d"/>
    <property type="match status" value="1"/>
</dbReference>
<dbReference type="SUPFAM" id="SSF55681">
    <property type="entry name" value="Class II aaRS and biotin synthetases"/>
    <property type="match status" value="1"/>
</dbReference>
<dbReference type="SUPFAM" id="SSF46589">
    <property type="entry name" value="tRNA-binding arm"/>
    <property type="match status" value="1"/>
</dbReference>
<dbReference type="PROSITE" id="PS50862">
    <property type="entry name" value="AA_TRNA_LIGASE_II"/>
    <property type="match status" value="1"/>
</dbReference>
<reference key="1">
    <citation type="journal article" date="2009" name="J. Bacteriol.">
        <title>Genome sequence of the probiotic bacterium Bifidobacterium animalis subsp. lactis AD011.</title>
        <authorList>
            <person name="Kim J.F."/>
            <person name="Jeong H."/>
            <person name="Yu D.S."/>
            <person name="Choi S.-H."/>
            <person name="Hur C.-G."/>
            <person name="Park M.-S."/>
            <person name="Yoon S.H."/>
            <person name="Kim D.-W."/>
            <person name="Ji G.E."/>
            <person name="Park H.-S."/>
            <person name="Oh T.K."/>
        </authorList>
    </citation>
    <scope>NUCLEOTIDE SEQUENCE [LARGE SCALE GENOMIC DNA]</scope>
    <source>
        <strain>AD011</strain>
    </source>
</reference>
<sequence>MAEGIVFDADAVSKDIAEGIAAIQQASTMEELKAIKAKYAGANSAMTRASKAIGSLAKNEKKEAGKVMGKLRADFGRAYGTKEASVKAAQEAAELAAETVDMTLPIRRKPLGARHPLPKLMEDVEDFFVGMGWQISDGPEVETEWFDFDALNFGPDHPARQMQDTFYVKGNQSKDAAGFVGSNMVLRTQTSSDQVRGLISHGVPLYIACPGRVFRTDELDATHTPVFHQVEALAVDKNLTMADLKGVLDKLAVAMFGPEAKSRLRPSYFPFTEPSAELDLWFPDKKGGPGWIEWGGCGMVNPNVLRSAGIDPDIYTGFAFGVGVERTLLLRHDINDMHDLVEGDVRFSEQFVMGE</sequence>